<keyword id="KW-0067">ATP-binding</keyword>
<keyword id="KW-0133">Cell shape</keyword>
<keyword id="KW-0961">Cell wall biogenesis/degradation</keyword>
<keyword id="KW-0963">Cytoplasm</keyword>
<keyword id="KW-0436">Ligase</keyword>
<keyword id="KW-0460">Magnesium</keyword>
<keyword id="KW-0464">Manganese</keyword>
<keyword id="KW-0479">Metal-binding</keyword>
<keyword id="KW-0547">Nucleotide-binding</keyword>
<keyword id="KW-0573">Peptidoglycan synthesis</keyword>
<keyword id="KW-1185">Reference proteome</keyword>
<evidence type="ECO:0000250" key="1"/>
<evidence type="ECO:0000255" key="2">
    <source>
        <dbReference type="HAMAP-Rule" id="MF_00047"/>
    </source>
</evidence>
<protein>
    <recommendedName>
        <fullName evidence="2">D-alanine--D-alanine ligase</fullName>
        <ecNumber evidence="2">6.3.2.4</ecNumber>
    </recommendedName>
    <alternativeName>
        <fullName evidence="2">D-Ala-D-Ala ligase</fullName>
    </alternativeName>
    <alternativeName>
        <fullName evidence="2">D-alanylalanine synthetase</fullName>
    </alternativeName>
</protein>
<organism>
    <name type="scientific">Treponema denticola (strain ATCC 35405 / DSM 14222 / CIP 103919 / JCM 8153 / KCTC 15104)</name>
    <dbReference type="NCBI Taxonomy" id="243275"/>
    <lineage>
        <taxon>Bacteria</taxon>
        <taxon>Pseudomonadati</taxon>
        <taxon>Spirochaetota</taxon>
        <taxon>Spirochaetia</taxon>
        <taxon>Spirochaetales</taxon>
        <taxon>Treponemataceae</taxon>
        <taxon>Treponema</taxon>
    </lineage>
</organism>
<accession>Q73JN2</accession>
<feature type="chain" id="PRO_0000341191" description="D-alanine--D-alanine ligase">
    <location>
        <begin position="1"/>
        <end position="368"/>
    </location>
</feature>
<feature type="domain" description="ATP-grasp" evidence="2">
    <location>
        <begin position="141"/>
        <end position="350"/>
    </location>
</feature>
<feature type="binding site" evidence="2">
    <location>
        <begin position="176"/>
        <end position="231"/>
    </location>
    <ligand>
        <name>ATP</name>
        <dbReference type="ChEBI" id="CHEBI:30616"/>
    </ligand>
</feature>
<feature type="binding site" evidence="2">
    <location>
        <position position="303"/>
    </location>
    <ligand>
        <name>Mg(2+)</name>
        <dbReference type="ChEBI" id="CHEBI:18420"/>
        <label>1</label>
    </ligand>
</feature>
<feature type="binding site" evidence="2">
    <location>
        <position position="317"/>
    </location>
    <ligand>
        <name>Mg(2+)</name>
        <dbReference type="ChEBI" id="CHEBI:18420"/>
        <label>1</label>
    </ligand>
</feature>
<feature type="binding site" evidence="2">
    <location>
        <position position="317"/>
    </location>
    <ligand>
        <name>Mg(2+)</name>
        <dbReference type="ChEBI" id="CHEBI:18420"/>
        <label>2</label>
    </ligand>
</feature>
<feature type="binding site" evidence="2">
    <location>
        <position position="319"/>
    </location>
    <ligand>
        <name>Mg(2+)</name>
        <dbReference type="ChEBI" id="CHEBI:18420"/>
        <label>2</label>
    </ligand>
</feature>
<proteinExistence type="inferred from homology"/>
<reference key="1">
    <citation type="journal article" date="2004" name="Proc. Natl. Acad. Sci. U.S.A.">
        <title>Comparison of the genome of the oral pathogen Treponema denticola with other spirochete genomes.</title>
        <authorList>
            <person name="Seshadri R."/>
            <person name="Myers G.S.A."/>
            <person name="Tettelin H."/>
            <person name="Eisen J.A."/>
            <person name="Heidelberg J.F."/>
            <person name="Dodson R.J."/>
            <person name="Davidsen T.M."/>
            <person name="DeBoy R.T."/>
            <person name="Fouts D.E."/>
            <person name="Haft D.H."/>
            <person name="Selengut J."/>
            <person name="Ren Q."/>
            <person name="Brinkac L.M."/>
            <person name="Madupu R."/>
            <person name="Kolonay J.F."/>
            <person name="Durkin S.A."/>
            <person name="Daugherty S.C."/>
            <person name="Shetty J."/>
            <person name="Shvartsbeyn A."/>
            <person name="Gebregeorgis E."/>
            <person name="Geer K."/>
            <person name="Tsegaye G."/>
            <person name="Malek J.A."/>
            <person name="Ayodeji B."/>
            <person name="Shatsman S."/>
            <person name="McLeod M.P."/>
            <person name="Smajs D."/>
            <person name="Howell J.K."/>
            <person name="Pal S."/>
            <person name="Amin A."/>
            <person name="Vashisth P."/>
            <person name="McNeill T.Z."/>
            <person name="Xiang Q."/>
            <person name="Sodergren E."/>
            <person name="Baca E."/>
            <person name="Weinstock G.M."/>
            <person name="Norris S.J."/>
            <person name="Fraser C.M."/>
            <person name="Paulsen I.T."/>
        </authorList>
    </citation>
    <scope>NUCLEOTIDE SEQUENCE [LARGE SCALE GENOMIC DNA]</scope>
    <source>
        <strain>ATCC 35405 / DSM 14222 / CIP 103919 / JCM 8153 / KCTC 15104</strain>
    </source>
</reference>
<name>DDL_TREDE</name>
<sequence>MNIAIIYGGKSSEHEVSLQSASSIIRTIDKKHKLHLIGISKNGAWYLHGDEERERIIKNEKAVLKIKKDEAKRVTVIPGGGAKKGLKAGDEFLPTDAVFAVLHGRFGEDGTIQGLFEMADLPYVGGDVMSTSISMDKEKTKMIWDYSGLPIVPYIAIKRQDWDDPEKKKAILARAEKDLEYPLFIKPCRAGSSVGAGMVKNRNELLEQAEESFLWDNKILVEACIEAREVECSVTGNTKTVAYIPGEIIPTHKFYDYEAKYTDPNGAELKIPADLNETQRKTIRETAIKAYEALDLSGLSRVDFFIDKRTGKIYLNEVNTIPGFTAISMFPKMCGASGLPYNELIMHLIELAIDRFKTDRKLKTCRQS</sequence>
<dbReference type="EC" id="6.3.2.4" evidence="2"/>
<dbReference type="EMBL" id="AE017226">
    <property type="protein sequence ID" value="AAS12903.1"/>
    <property type="molecule type" value="Genomic_DNA"/>
</dbReference>
<dbReference type="RefSeq" id="NP_972984.1">
    <property type="nucleotide sequence ID" value="NC_002967.9"/>
</dbReference>
<dbReference type="RefSeq" id="WP_002680316.1">
    <property type="nucleotide sequence ID" value="NC_002967.9"/>
</dbReference>
<dbReference type="SMR" id="Q73JN2"/>
<dbReference type="STRING" id="243275.TDE_2385"/>
<dbReference type="PaxDb" id="243275-TDE_2385"/>
<dbReference type="GeneID" id="2740687"/>
<dbReference type="KEGG" id="tde:TDE_2385"/>
<dbReference type="PATRIC" id="fig|243275.7.peg.2253"/>
<dbReference type="eggNOG" id="COG1181">
    <property type="taxonomic scope" value="Bacteria"/>
</dbReference>
<dbReference type="HOGENOM" id="CLU_039268_0_0_12"/>
<dbReference type="OrthoDB" id="9813261at2"/>
<dbReference type="UniPathway" id="UPA00219"/>
<dbReference type="Proteomes" id="UP000008212">
    <property type="component" value="Chromosome"/>
</dbReference>
<dbReference type="GO" id="GO:0005829">
    <property type="term" value="C:cytosol"/>
    <property type="evidence" value="ECO:0007669"/>
    <property type="project" value="TreeGrafter"/>
</dbReference>
<dbReference type="GO" id="GO:0005524">
    <property type="term" value="F:ATP binding"/>
    <property type="evidence" value="ECO:0007669"/>
    <property type="project" value="UniProtKB-KW"/>
</dbReference>
<dbReference type="GO" id="GO:0008716">
    <property type="term" value="F:D-alanine-D-alanine ligase activity"/>
    <property type="evidence" value="ECO:0007669"/>
    <property type="project" value="UniProtKB-UniRule"/>
</dbReference>
<dbReference type="GO" id="GO:0046872">
    <property type="term" value="F:metal ion binding"/>
    <property type="evidence" value="ECO:0007669"/>
    <property type="project" value="UniProtKB-KW"/>
</dbReference>
<dbReference type="GO" id="GO:0071555">
    <property type="term" value="P:cell wall organization"/>
    <property type="evidence" value="ECO:0007669"/>
    <property type="project" value="UniProtKB-KW"/>
</dbReference>
<dbReference type="GO" id="GO:0009252">
    <property type="term" value="P:peptidoglycan biosynthetic process"/>
    <property type="evidence" value="ECO:0007669"/>
    <property type="project" value="UniProtKB-UniRule"/>
</dbReference>
<dbReference type="GO" id="GO:0008360">
    <property type="term" value="P:regulation of cell shape"/>
    <property type="evidence" value="ECO:0007669"/>
    <property type="project" value="UniProtKB-KW"/>
</dbReference>
<dbReference type="FunFam" id="3.30.470.20:FF:000008">
    <property type="entry name" value="D-alanine--D-alanine ligase"/>
    <property type="match status" value="1"/>
</dbReference>
<dbReference type="Gene3D" id="3.40.50.20">
    <property type="match status" value="1"/>
</dbReference>
<dbReference type="Gene3D" id="3.30.1490.20">
    <property type="entry name" value="ATP-grasp fold, A domain"/>
    <property type="match status" value="1"/>
</dbReference>
<dbReference type="Gene3D" id="3.30.470.20">
    <property type="entry name" value="ATP-grasp fold, B domain"/>
    <property type="match status" value="1"/>
</dbReference>
<dbReference type="HAMAP" id="MF_00047">
    <property type="entry name" value="Dala_Dala_lig"/>
    <property type="match status" value="1"/>
</dbReference>
<dbReference type="InterPro" id="IPR011761">
    <property type="entry name" value="ATP-grasp"/>
</dbReference>
<dbReference type="InterPro" id="IPR013815">
    <property type="entry name" value="ATP_grasp_subdomain_1"/>
</dbReference>
<dbReference type="InterPro" id="IPR000291">
    <property type="entry name" value="D-Ala_lig_Van_CS"/>
</dbReference>
<dbReference type="InterPro" id="IPR005905">
    <property type="entry name" value="D_ala_D_ala"/>
</dbReference>
<dbReference type="InterPro" id="IPR011095">
    <property type="entry name" value="Dala_Dala_lig_C"/>
</dbReference>
<dbReference type="InterPro" id="IPR011127">
    <property type="entry name" value="Dala_Dala_lig_N"/>
</dbReference>
<dbReference type="InterPro" id="IPR016185">
    <property type="entry name" value="PreATP-grasp_dom_sf"/>
</dbReference>
<dbReference type="NCBIfam" id="TIGR01205">
    <property type="entry name" value="D_ala_D_alaTIGR"/>
    <property type="match status" value="1"/>
</dbReference>
<dbReference type="NCBIfam" id="NF002378">
    <property type="entry name" value="PRK01372.1"/>
    <property type="match status" value="1"/>
</dbReference>
<dbReference type="NCBIfam" id="NF002528">
    <property type="entry name" value="PRK01966.1-4"/>
    <property type="match status" value="1"/>
</dbReference>
<dbReference type="PANTHER" id="PTHR23132">
    <property type="entry name" value="D-ALANINE--D-ALANINE LIGASE"/>
    <property type="match status" value="1"/>
</dbReference>
<dbReference type="PANTHER" id="PTHR23132:SF25">
    <property type="entry name" value="D-ALANINE--D-ALANINE LIGASE A"/>
    <property type="match status" value="1"/>
</dbReference>
<dbReference type="Pfam" id="PF07478">
    <property type="entry name" value="Dala_Dala_lig_C"/>
    <property type="match status" value="1"/>
</dbReference>
<dbReference type="Pfam" id="PF01820">
    <property type="entry name" value="Dala_Dala_lig_N"/>
    <property type="match status" value="1"/>
</dbReference>
<dbReference type="PIRSF" id="PIRSF039102">
    <property type="entry name" value="Ddl/VanB"/>
    <property type="match status" value="1"/>
</dbReference>
<dbReference type="SUPFAM" id="SSF56059">
    <property type="entry name" value="Glutathione synthetase ATP-binding domain-like"/>
    <property type="match status" value="1"/>
</dbReference>
<dbReference type="SUPFAM" id="SSF52440">
    <property type="entry name" value="PreATP-grasp domain"/>
    <property type="match status" value="1"/>
</dbReference>
<dbReference type="PROSITE" id="PS50975">
    <property type="entry name" value="ATP_GRASP"/>
    <property type="match status" value="1"/>
</dbReference>
<dbReference type="PROSITE" id="PS00843">
    <property type="entry name" value="DALA_DALA_LIGASE_1"/>
    <property type="match status" value="1"/>
</dbReference>
<dbReference type="PROSITE" id="PS00844">
    <property type="entry name" value="DALA_DALA_LIGASE_2"/>
    <property type="match status" value="1"/>
</dbReference>
<gene>
    <name evidence="2" type="primary">ddl</name>
    <name type="ordered locus">TDE_2385</name>
</gene>
<comment type="function">
    <text evidence="2">Cell wall formation.</text>
</comment>
<comment type="catalytic activity">
    <reaction evidence="2">
        <text>2 D-alanine + ATP = D-alanyl-D-alanine + ADP + phosphate + H(+)</text>
        <dbReference type="Rhea" id="RHEA:11224"/>
        <dbReference type="ChEBI" id="CHEBI:15378"/>
        <dbReference type="ChEBI" id="CHEBI:30616"/>
        <dbReference type="ChEBI" id="CHEBI:43474"/>
        <dbReference type="ChEBI" id="CHEBI:57416"/>
        <dbReference type="ChEBI" id="CHEBI:57822"/>
        <dbReference type="ChEBI" id="CHEBI:456216"/>
        <dbReference type="EC" id="6.3.2.4"/>
    </reaction>
</comment>
<comment type="cofactor">
    <cofactor evidence="1">
        <name>Mg(2+)</name>
        <dbReference type="ChEBI" id="CHEBI:18420"/>
    </cofactor>
    <cofactor evidence="1">
        <name>Mn(2+)</name>
        <dbReference type="ChEBI" id="CHEBI:29035"/>
    </cofactor>
    <text evidence="1">Binds 2 magnesium or manganese ions per subunit.</text>
</comment>
<comment type="pathway">
    <text evidence="2">Cell wall biogenesis; peptidoglycan biosynthesis.</text>
</comment>
<comment type="subcellular location">
    <subcellularLocation>
        <location evidence="2">Cytoplasm</location>
    </subcellularLocation>
</comment>
<comment type="similarity">
    <text evidence="2">Belongs to the D-alanine--D-alanine ligase family.</text>
</comment>